<accession>Q8STD9</accession>
<feature type="chain" id="PRO_0000192887" description="Small ribosomal subunit protein eS25">
    <location>
        <begin position="1"/>
        <end position="109"/>
    </location>
</feature>
<feature type="region of interest" description="Disordered" evidence="1">
    <location>
        <begin position="1"/>
        <end position="34"/>
    </location>
</feature>
<feature type="compositionally biased region" description="Basic and acidic residues" evidence="1">
    <location>
        <begin position="1"/>
        <end position="13"/>
    </location>
</feature>
<sequence>MVKKIQESKEKKALKAASGTRKDKKKWGDGRKKEEVRRAVTVSEELLAKVRKDVGRASVVTRYMIGSRYNLNLGVAENVLRHLSNEGVVQQVLGNRRMTIYAGCRAQEQ</sequence>
<proteinExistence type="evidence at protein level"/>
<name>RS25_ENCCU</name>
<dbReference type="EMBL" id="AL590448">
    <property type="protein sequence ID" value="CAD26410.1"/>
    <property type="molecule type" value="Genomic_DNA"/>
</dbReference>
<dbReference type="EMBL" id="AL590448">
    <property type="protein sequence ID" value="CAD26413.1"/>
    <property type="molecule type" value="Genomic_DNA"/>
</dbReference>
<dbReference type="RefSeq" id="NP_597234.1">
    <property type="nucleotide sequence ID" value="NM_001041843.1"/>
</dbReference>
<dbReference type="RefSeq" id="NP_597237.1">
    <property type="nucleotide sequence ID" value="NM_001041846.1"/>
</dbReference>
<dbReference type="PDB" id="7QEP">
    <property type="method" value="EM"/>
    <property type="resolution" value="2.70 A"/>
    <property type="chains" value="D5=1-109"/>
</dbReference>
<dbReference type="PDBsum" id="7QEP"/>
<dbReference type="EMDB" id="EMD-13936"/>
<dbReference type="SMR" id="Q8STD9"/>
<dbReference type="STRING" id="284813.Q8STD9"/>
<dbReference type="GeneID" id="859656"/>
<dbReference type="GeneID" id="859659"/>
<dbReference type="KEGG" id="ecu:ECU08_1040"/>
<dbReference type="KEGG" id="ecu:ECU08_1070"/>
<dbReference type="VEuPathDB" id="MicrosporidiaDB:ECU08_1040"/>
<dbReference type="VEuPathDB" id="MicrosporidiaDB:ECU08_1070"/>
<dbReference type="HOGENOM" id="CLU_129470_3_0_1"/>
<dbReference type="InParanoid" id="Q8STD9"/>
<dbReference type="OMA" id="KKKWTTG"/>
<dbReference type="OrthoDB" id="10263513at2759"/>
<dbReference type="Proteomes" id="UP000000819">
    <property type="component" value="Chromosome VIII"/>
</dbReference>
<dbReference type="GO" id="GO:1990904">
    <property type="term" value="C:ribonucleoprotein complex"/>
    <property type="evidence" value="ECO:0007669"/>
    <property type="project" value="UniProtKB-KW"/>
</dbReference>
<dbReference type="GO" id="GO:0005840">
    <property type="term" value="C:ribosome"/>
    <property type="evidence" value="ECO:0007669"/>
    <property type="project" value="UniProtKB-KW"/>
</dbReference>
<dbReference type="Gene3D" id="3.30.63.20">
    <property type="match status" value="1"/>
</dbReference>
<dbReference type="InterPro" id="IPR004977">
    <property type="entry name" value="Ribosomal_eS25"/>
</dbReference>
<dbReference type="PANTHER" id="PTHR12850">
    <property type="entry name" value="40S RIBOSOMAL PROTEIN S25"/>
    <property type="match status" value="1"/>
</dbReference>
<dbReference type="Pfam" id="PF03297">
    <property type="entry name" value="Ribosomal_S25"/>
    <property type="match status" value="1"/>
</dbReference>
<protein>
    <recommendedName>
        <fullName evidence="2">Small ribosomal subunit protein eS25</fullName>
    </recommendedName>
    <alternativeName>
        <fullName>40S ribosomal protein S25</fullName>
    </alternativeName>
</protein>
<gene>
    <name type="primary">RPS25-1</name>
    <name type="ordered locus">ECU08_1040</name>
</gene>
<gene>
    <name type="primary">RPS25-2</name>
    <name type="ordered locus">ECU08_1070</name>
</gene>
<organism>
    <name type="scientific">Encephalitozoon cuniculi (strain GB-M1)</name>
    <name type="common">Microsporidian parasite</name>
    <dbReference type="NCBI Taxonomy" id="284813"/>
    <lineage>
        <taxon>Eukaryota</taxon>
        <taxon>Fungi</taxon>
        <taxon>Fungi incertae sedis</taxon>
        <taxon>Microsporidia</taxon>
        <taxon>Unikaryonidae</taxon>
        <taxon>Encephalitozoon</taxon>
    </lineage>
</organism>
<reference key="1">
    <citation type="journal article" date="2001" name="Nature">
        <title>Genome sequence and gene compaction of the eukaryote parasite Encephalitozoon cuniculi.</title>
        <authorList>
            <person name="Katinka M.D."/>
            <person name="Duprat S."/>
            <person name="Cornillot E."/>
            <person name="Metenier G."/>
            <person name="Thomarat F."/>
            <person name="Prensier G."/>
            <person name="Barbe V."/>
            <person name="Peyretaillade E."/>
            <person name="Brottier P."/>
            <person name="Wincker P."/>
            <person name="Delbac F."/>
            <person name="El Alaoui H."/>
            <person name="Peyret P."/>
            <person name="Saurin W."/>
            <person name="Gouy M."/>
            <person name="Weissenbach J."/>
            <person name="Vivares C.P."/>
        </authorList>
    </citation>
    <scope>NUCLEOTIDE SEQUENCE [LARGE SCALE GENOMIC DNA]</scope>
    <source>
        <strain>GB-M1</strain>
    </source>
</reference>
<comment type="similarity">
    <text evidence="2">Belongs to the eukaryotic ribosomal protein eS25 family.</text>
</comment>
<keyword id="KW-0002">3D-structure</keyword>
<keyword id="KW-1185">Reference proteome</keyword>
<keyword id="KW-0687">Ribonucleoprotein</keyword>
<keyword id="KW-0689">Ribosomal protein</keyword>
<evidence type="ECO:0000256" key="1">
    <source>
        <dbReference type="SAM" id="MobiDB-lite"/>
    </source>
</evidence>
<evidence type="ECO:0000305" key="2"/>